<comment type="catalytic activity">
    <reaction>
        <text>a phosphate monoester + H2O = an alcohol + phosphate</text>
        <dbReference type="Rhea" id="RHEA:15017"/>
        <dbReference type="ChEBI" id="CHEBI:15377"/>
        <dbReference type="ChEBI" id="CHEBI:30879"/>
        <dbReference type="ChEBI" id="CHEBI:43474"/>
        <dbReference type="ChEBI" id="CHEBI:67140"/>
        <dbReference type="EC" id="3.1.3.2"/>
    </reaction>
</comment>
<comment type="cofactor">
    <cofactor evidence="1">
        <name>Fe cation</name>
        <dbReference type="ChEBI" id="CHEBI:24875"/>
    </cofactor>
    <text evidence="1">Binds 1 Fe cation per subunit.</text>
</comment>
<comment type="cofactor">
    <cofactor evidence="1">
        <name>Zn(2+)</name>
        <dbReference type="ChEBI" id="CHEBI:29105"/>
    </cofactor>
    <text evidence="1">Binds 1 zinc ion per subunit.</text>
</comment>
<comment type="subunit">
    <text evidence="1">Homodimer.</text>
</comment>
<comment type="subcellular location">
    <subcellularLocation>
        <location evidence="1">Secreted</location>
    </subcellularLocation>
</comment>
<comment type="tissue specificity">
    <text evidence="3">Specifically expressed in flowers.</text>
</comment>
<comment type="similarity">
    <text evidence="4">Belongs to the metallophosphoesterase superfamily. Purple acid phosphatase family.</text>
</comment>
<evidence type="ECO:0000250" key="1"/>
<evidence type="ECO:0000255" key="2"/>
<evidence type="ECO:0000269" key="3">
    <source>
    </source>
</evidence>
<evidence type="ECO:0000305" key="4"/>
<name>PPA25_ARATH</name>
<reference key="1">
    <citation type="journal article" date="2005" name="Plant Mol. Biol.">
        <title>Expression patterns of purple acid phosphatase genes in Arabidopsis organs and functional analysis of AtPAP23 predominantly transcribed in flower.</title>
        <authorList>
            <person name="Zhu H."/>
            <person name="Qian W."/>
            <person name="Lu X."/>
            <person name="Li D."/>
            <person name="Liu X."/>
            <person name="Liu K."/>
            <person name="Wang D."/>
        </authorList>
    </citation>
    <scope>NUCLEOTIDE SEQUENCE [MRNA]</scope>
    <scope>TISSUE SPECIFICITY</scope>
    <source>
        <strain>cv. Columbia</strain>
    </source>
</reference>
<reference key="2">
    <citation type="journal article" date="1998" name="Nature">
        <title>Analysis of 1.9 Mb of contiguous sequence from chromosome 4 of Arabidopsis thaliana.</title>
        <authorList>
            <person name="Bevan M."/>
            <person name="Bancroft I."/>
            <person name="Bent E."/>
            <person name="Love K."/>
            <person name="Goodman H.M."/>
            <person name="Dean C."/>
            <person name="Bergkamp R."/>
            <person name="Dirkse W."/>
            <person name="van Staveren M."/>
            <person name="Stiekema W."/>
            <person name="Drost L."/>
            <person name="Ridley P."/>
            <person name="Hudson S.-A."/>
            <person name="Patel K."/>
            <person name="Murphy G."/>
            <person name="Piffanelli P."/>
            <person name="Wedler H."/>
            <person name="Wedler E."/>
            <person name="Wambutt R."/>
            <person name="Weitzenegger T."/>
            <person name="Pohl T."/>
            <person name="Terryn N."/>
            <person name="Gielen J."/>
            <person name="Villarroel R."/>
            <person name="De Clercq R."/>
            <person name="van Montagu M."/>
            <person name="Lecharny A."/>
            <person name="Aubourg S."/>
            <person name="Gy I."/>
            <person name="Kreis M."/>
            <person name="Lao N."/>
            <person name="Kavanagh T."/>
            <person name="Hempel S."/>
            <person name="Kotter P."/>
            <person name="Entian K.-D."/>
            <person name="Rieger M."/>
            <person name="Schaefer M."/>
            <person name="Funk B."/>
            <person name="Mueller-Auer S."/>
            <person name="Silvey M."/>
            <person name="James R."/>
            <person name="Monfort A."/>
            <person name="Pons A."/>
            <person name="Puigdomenech P."/>
            <person name="Douka A."/>
            <person name="Voukelatou E."/>
            <person name="Milioni D."/>
            <person name="Hatzopoulos P."/>
            <person name="Piravandi E."/>
            <person name="Obermaier B."/>
            <person name="Hilbert H."/>
            <person name="Duesterhoeft A."/>
            <person name="Moores T."/>
            <person name="Jones J.D.G."/>
            <person name="Eneva T."/>
            <person name="Palme K."/>
            <person name="Benes V."/>
            <person name="Rechmann S."/>
            <person name="Ansorge W."/>
            <person name="Cooke R."/>
            <person name="Berger C."/>
            <person name="Delseny M."/>
            <person name="Voet M."/>
            <person name="Volckaert G."/>
            <person name="Mewes H.-W."/>
            <person name="Klosterman S."/>
            <person name="Schueller C."/>
            <person name="Chalwatzis N."/>
        </authorList>
    </citation>
    <scope>NUCLEOTIDE SEQUENCE [LARGE SCALE GENOMIC DNA]</scope>
    <source>
        <strain>cv. Columbia</strain>
    </source>
</reference>
<reference key="3">
    <citation type="journal article" date="1999" name="Nature">
        <title>Sequence and analysis of chromosome 4 of the plant Arabidopsis thaliana.</title>
        <authorList>
            <person name="Mayer K.F.X."/>
            <person name="Schueller C."/>
            <person name="Wambutt R."/>
            <person name="Murphy G."/>
            <person name="Volckaert G."/>
            <person name="Pohl T."/>
            <person name="Duesterhoeft A."/>
            <person name="Stiekema W."/>
            <person name="Entian K.-D."/>
            <person name="Terryn N."/>
            <person name="Harris B."/>
            <person name="Ansorge W."/>
            <person name="Brandt P."/>
            <person name="Grivell L.A."/>
            <person name="Rieger M."/>
            <person name="Weichselgartner M."/>
            <person name="de Simone V."/>
            <person name="Obermaier B."/>
            <person name="Mache R."/>
            <person name="Mueller M."/>
            <person name="Kreis M."/>
            <person name="Delseny M."/>
            <person name="Puigdomenech P."/>
            <person name="Watson M."/>
            <person name="Schmidtheini T."/>
            <person name="Reichert B."/>
            <person name="Portetelle D."/>
            <person name="Perez-Alonso M."/>
            <person name="Boutry M."/>
            <person name="Bancroft I."/>
            <person name="Vos P."/>
            <person name="Hoheisel J."/>
            <person name="Zimmermann W."/>
            <person name="Wedler H."/>
            <person name="Ridley P."/>
            <person name="Langham S.-A."/>
            <person name="McCullagh B."/>
            <person name="Bilham L."/>
            <person name="Robben J."/>
            <person name="van der Schueren J."/>
            <person name="Grymonprez B."/>
            <person name="Chuang Y.-J."/>
            <person name="Vandenbussche F."/>
            <person name="Braeken M."/>
            <person name="Weltjens I."/>
            <person name="Voet M."/>
            <person name="Bastiaens I."/>
            <person name="Aert R."/>
            <person name="Defoor E."/>
            <person name="Weitzenegger T."/>
            <person name="Bothe G."/>
            <person name="Ramsperger U."/>
            <person name="Hilbert H."/>
            <person name="Braun M."/>
            <person name="Holzer E."/>
            <person name="Brandt A."/>
            <person name="Peters S."/>
            <person name="van Staveren M."/>
            <person name="Dirkse W."/>
            <person name="Mooijman P."/>
            <person name="Klein Lankhorst R."/>
            <person name="Rose M."/>
            <person name="Hauf J."/>
            <person name="Koetter P."/>
            <person name="Berneiser S."/>
            <person name="Hempel S."/>
            <person name="Feldpausch M."/>
            <person name="Lamberth S."/>
            <person name="Van den Daele H."/>
            <person name="De Keyser A."/>
            <person name="Buysshaert C."/>
            <person name="Gielen J."/>
            <person name="Villarroel R."/>
            <person name="De Clercq R."/>
            <person name="van Montagu M."/>
            <person name="Rogers J."/>
            <person name="Cronin A."/>
            <person name="Quail M.A."/>
            <person name="Bray-Allen S."/>
            <person name="Clark L."/>
            <person name="Doggett J."/>
            <person name="Hall S."/>
            <person name="Kay M."/>
            <person name="Lennard N."/>
            <person name="McLay K."/>
            <person name="Mayes R."/>
            <person name="Pettett A."/>
            <person name="Rajandream M.A."/>
            <person name="Lyne M."/>
            <person name="Benes V."/>
            <person name="Rechmann S."/>
            <person name="Borkova D."/>
            <person name="Bloecker H."/>
            <person name="Scharfe M."/>
            <person name="Grimm M."/>
            <person name="Loehnert T.-H."/>
            <person name="Dose S."/>
            <person name="de Haan M."/>
            <person name="Maarse A.C."/>
            <person name="Schaefer M."/>
            <person name="Mueller-Auer S."/>
            <person name="Gabel C."/>
            <person name="Fuchs M."/>
            <person name="Fartmann B."/>
            <person name="Granderath K."/>
            <person name="Dauner D."/>
            <person name="Herzl A."/>
            <person name="Neumann S."/>
            <person name="Argiriou A."/>
            <person name="Vitale D."/>
            <person name="Liguori R."/>
            <person name="Piravandi E."/>
            <person name="Massenet O."/>
            <person name="Quigley F."/>
            <person name="Clabauld G."/>
            <person name="Muendlein A."/>
            <person name="Felber R."/>
            <person name="Schnabl S."/>
            <person name="Hiller R."/>
            <person name="Schmidt W."/>
            <person name="Lecharny A."/>
            <person name="Aubourg S."/>
            <person name="Chefdor F."/>
            <person name="Cooke R."/>
            <person name="Berger C."/>
            <person name="Monfort A."/>
            <person name="Casacuberta E."/>
            <person name="Gibbons T."/>
            <person name="Weber N."/>
            <person name="Vandenbol M."/>
            <person name="Bargues M."/>
            <person name="Terol J."/>
            <person name="Torres A."/>
            <person name="Perez-Perez A."/>
            <person name="Purnelle B."/>
            <person name="Bent E."/>
            <person name="Johnson S."/>
            <person name="Tacon D."/>
            <person name="Jesse T."/>
            <person name="Heijnen L."/>
            <person name="Schwarz S."/>
            <person name="Scholler P."/>
            <person name="Heber S."/>
            <person name="Francs P."/>
            <person name="Bielke C."/>
            <person name="Frishman D."/>
            <person name="Haase D."/>
            <person name="Lemcke K."/>
            <person name="Mewes H.-W."/>
            <person name="Stocker S."/>
            <person name="Zaccaria P."/>
            <person name="Bevan M."/>
            <person name="Wilson R.K."/>
            <person name="de la Bastide M."/>
            <person name="Habermann K."/>
            <person name="Parnell L."/>
            <person name="Dedhia N."/>
            <person name="Gnoj L."/>
            <person name="Schutz K."/>
            <person name="Huang E."/>
            <person name="Spiegel L."/>
            <person name="Sekhon M."/>
            <person name="Murray J."/>
            <person name="Sheet P."/>
            <person name="Cordes M."/>
            <person name="Abu-Threideh J."/>
            <person name="Stoneking T."/>
            <person name="Kalicki J."/>
            <person name="Graves T."/>
            <person name="Harmon G."/>
            <person name="Edwards J."/>
            <person name="Latreille P."/>
            <person name="Courtney L."/>
            <person name="Cloud J."/>
            <person name="Abbott A."/>
            <person name="Scott K."/>
            <person name="Johnson D."/>
            <person name="Minx P."/>
            <person name="Bentley D."/>
            <person name="Fulton B."/>
            <person name="Miller N."/>
            <person name="Greco T."/>
            <person name="Kemp K."/>
            <person name="Kramer J."/>
            <person name="Fulton L."/>
            <person name="Mardis E."/>
            <person name="Dante M."/>
            <person name="Pepin K."/>
            <person name="Hillier L.W."/>
            <person name="Nelson J."/>
            <person name="Spieth J."/>
            <person name="Ryan E."/>
            <person name="Andrews S."/>
            <person name="Geisel C."/>
            <person name="Layman D."/>
            <person name="Du H."/>
            <person name="Ali J."/>
            <person name="Berghoff A."/>
            <person name="Jones K."/>
            <person name="Drone K."/>
            <person name="Cotton M."/>
            <person name="Joshu C."/>
            <person name="Antonoiu B."/>
            <person name="Zidanic M."/>
            <person name="Strong C."/>
            <person name="Sun H."/>
            <person name="Lamar B."/>
            <person name="Yordan C."/>
            <person name="Ma P."/>
            <person name="Zhong J."/>
            <person name="Preston R."/>
            <person name="Vil D."/>
            <person name="Shekher M."/>
            <person name="Matero A."/>
            <person name="Shah R."/>
            <person name="Swaby I.K."/>
            <person name="O'Shaughnessy A."/>
            <person name="Rodriguez M."/>
            <person name="Hoffman J."/>
            <person name="Till S."/>
            <person name="Granat S."/>
            <person name="Shohdy N."/>
            <person name="Hasegawa A."/>
            <person name="Hameed A."/>
            <person name="Lodhi M."/>
            <person name="Johnson A."/>
            <person name="Chen E."/>
            <person name="Marra M.A."/>
            <person name="Martienssen R."/>
            <person name="McCombie W.R."/>
        </authorList>
    </citation>
    <scope>NUCLEOTIDE SEQUENCE [LARGE SCALE GENOMIC DNA]</scope>
    <source>
        <strain>cv. Columbia</strain>
    </source>
</reference>
<reference key="4">
    <citation type="journal article" date="2017" name="Plant J.">
        <title>Araport11: a complete reannotation of the Arabidopsis thaliana reference genome.</title>
        <authorList>
            <person name="Cheng C.Y."/>
            <person name="Krishnakumar V."/>
            <person name="Chan A.P."/>
            <person name="Thibaud-Nissen F."/>
            <person name="Schobel S."/>
            <person name="Town C.D."/>
        </authorList>
    </citation>
    <scope>GENOME REANNOTATION</scope>
    <source>
        <strain>cv. Columbia</strain>
    </source>
</reference>
<reference key="5">
    <citation type="journal article" date="2002" name="J. Biol. Chem.">
        <title>Purple acid phosphatases of Arabidopsis thaliana. Comparative analysis and differential regulation by phosphate deprivation.</title>
        <authorList>
            <person name="Li D."/>
            <person name="Zhu H."/>
            <person name="Liu K."/>
            <person name="Liu X."/>
            <person name="Leggewie G."/>
            <person name="Udvardi M."/>
            <person name="Wang D."/>
        </authorList>
    </citation>
    <scope>GENE FAMILY</scope>
    <scope>NOMENCLATURE</scope>
</reference>
<accession>O23244</accession>
<feature type="signal peptide" evidence="2">
    <location>
        <begin position="1"/>
        <end position="21"/>
    </location>
</feature>
<feature type="chain" id="PRO_0000372828" description="Purple acid phosphatase 25">
    <location>
        <begin position="22"/>
        <end position="466"/>
    </location>
</feature>
<feature type="active site" description="Proton donor" evidence="1">
    <location>
        <position position="324"/>
    </location>
</feature>
<feature type="binding site" evidence="1">
    <location>
        <position position="164"/>
    </location>
    <ligand>
        <name>Fe cation</name>
        <dbReference type="ChEBI" id="CHEBI:24875"/>
    </ligand>
</feature>
<feature type="binding site" evidence="1">
    <location>
        <position position="192"/>
    </location>
    <ligand>
        <name>Fe cation</name>
        <dbReference type="ChEBI" id="CHEBI:24875"/>
    </ligand>
</feature>
<feature type="binding site" evidence="1">
    <location>
        <position position="192"/>
    </location>
    <ligand>
        <name>Zn(2+)</name>
        <dbReference type="ChEBI" id="CHEBI:29105"/>
    </ligand>
</feature>
<feature type="binding site" evidence="1">
    <location>
        <position position="195"/>
    </location>
    <ligand>
        <name>Fe cation</name>
        <dbReference type="ChEBI" id="CHEBI:24875"/>
    </ligand>
</feature>
<feature type="binding site" evidence="1">
    <location>
        <position position="229"/>
    </location>
    <ligand>
        <name>substrate</name>
    </ligand>
</feature>
<feature type="binding site" evidence="1">
    <location>
        <position position="229"/>
    </location>
    <ligand>
        <name>Zn(2+)</name>
        <dbReference type="ChEBI" id="CHEBI:29105"/>
    </ligand>
</feature>
<feature type="binding site" evidence="1">
    <location>
        <position position="314"/>
    </location>
    <ligand>
        <name>Zn(2+)</name>
        <dbReference type="ChEBI" id="CHEBI:29105"/>
    </ligand>
</feature>
<feature type="binding site" evidence="1">
    <location>
        <begin position="351"/>
        <end position="353"/>
    </location>
    <ligand>
        <name>substrate</name>
    </ligand>
</feature>
<feature type="binding site" evidence="1">
    <location>
        <position position="351"/>
    </location>
    <ligand>
        <name>Zn(2+)</name>
        <dbReference type="ChEBI" id="CHEBI:29105"/>
    </ligand>
</feature>
<feature type="binding site" evidence="1">
    <location>
        <position position="353"/>
    </location>
    <ligand>
        <name>Fe cation</name>
        <dbReference type="ChEBI" id="CHEBI:24875"/>
    </ligand>
</feature>
<feature type="glycosylation site" description="N-linked (GlcNAc...) asparagine" evidence="2">
    <location>
        <position position="172"/>
    </location>
</feature>
<feature type="glycosylation site" description="N-linked (GlcNAc...) asparagine" evidence="2">
    <location>
        <position position="367"/>
    </location>
</feature>
<feature type="glycosylation site" description="N-linked (GlcNAc...) asparagine" evidence="2">
    <location>
        <position position="424"/>
    </location>
</feature>
<dbReference type="EC" id="3.1.3.2"/>
<dbReference type="EMBL" id="AY390529">
    <property type="protein sequence ID" value="AAQ93684.1"/>
    <property type="molecule type" value="mRNA"/>
</dbReference>
<dbReference type="EMBL" id="Z99708">
    <property type="protein sequence ID" value="CAB16853.1"/>
    <property type="molecule type" value="Genomic_DNA"/>
</dbReference>
<dbReference type="EMBL" id="AL022141">
    <property type="protein sequence ID" value="CAA18136.1"/>
    <property type="molecule type" value="Genomic_DNA"/>
</dbReference>
<dbReference type="EMBL" id="AL161589">
    <property type="protein sequence ID" value="CAB80301.1"/>
    <property type="molecule type" value="Genomic_DNA"/>
</dbReference>
<dbReference type="EMBL" id="CP002687">
    <property type="protein sequence ID" value="AEE86645.1"/>
    <property type="molecule type" value="Genomic_DNA"/>
</dbReference>
<dbReference type="PIR" id="T04599">
    <property type="entry name" value="T04599"/>
</dbReference>
<dbReference type="RefSeq" id="NP_195353.1">
    <property type="nucleotide sequence ID" value="NM_119798.1"/>
</dbReference>
<dbReference type="SMR" id="O23244"/>
<dbReference type="FunCoup" id="O23244">
    <property type="interactions" value="53"/>
</dbReference>
<dbReference type="STRING" id="3702.O23244"/>
<dbReference type="GlyCosmos" id="O23244">
    <property type="glycosylation" value="3 sites, No reported glycans"/>
</dbReference>
<dbReference type="GlyGen" id="O23244">
    <property type="glycosylation" value="3 sites"/>
</dbReference>
<dbReference type="iPTMnet" id="O23244"/>
<dbReference type="PaxDb" id="3702-AT4G36350.1"/>
<dbReference type="ProteomicsDB" id="249026"/>
<dbReference type="EnsemblPlants" id="AT4G36350.1">
    <property type="protein sequence ID" value="AT4G36350.1"/>
    <property type="gene ID" value="AT4G36350"/>
</dbReference>
<dbReference type="GeneID" id="829787"/>
<dbReference type="Gramene" id="AT4G36350.1">
    <property type="protein sequence ID" value="AT4G36350.1"/>
    <property type="gene ID" value="AT4G36350"/>
</dbReference>
<dbReference type="KEGG" id="ath:AT4G36350"/>
<dbReference type="Araport" id="AT4G36350"/>
<dbReference type="TAIR" id="AT4G36350">
    <property type="gene designation" value="PAP25"/>
</dbReference>
<dbReference type="eggNOG" id="KOG1378">
    <property type="taxonomic scope" value="Eukaryota"/>
</dbReference>
<dbReference type="HOGENOM" id="CLU_013387_0_1_1"/>
<dbReference type="InParanoid" id="O23244"/>
<dbReference type="OMA" id="FICISTE"/>
<dbReference type="OrthoDB" id="45007at2759"/>
<dbReference type="PhylomeDB" id="O23244"/>
<dbReference type="BioCyc" id="ARA:AT4G36350-MONOMER"/>
<dbReference type="PRO" id="PR:O23244"/>
<dbReference type="Proteomes" id="UP000006548">
    <property type="component" value="Chromosome 4"/>
</dbReference>
<dbReference type="ExpressionAtlas" id="O23244">
    <property type="expression patterns" value="baseline and differential"/>
</dbReference>
<dbReference type="GO" id="GO:0005576">
    <property type="term" value="C:extracellular region"/>
    <property type="evidence" value="ECO:0007669"/>
    <property type="project" value="UniProtKB-SubCell"/>
</dbReference>
<dbReference type="GO" id="GO:0003993">
    <property type="term" value="F:acid phosphatase activity"/>
    <property type="evidence" value="ECO:0000314"/>
    <property type="project" value="TAIR"/>
</dbReference>
<dbReference type="GO" id="GO:0046872">
    <property type="term" value="F:metal ion binding"/>
    <property type="evidence" value="ECO:0007669"/>
    <property type="project" value="UniProtKB-KW"/>
</dbReference>
<dbReference type="GO" id="GO:0004721">
    <property type="term" value="F:phosphoprotein phosphatase activity"/>
    <property type="evidence" value="ECO:0000314"/>
    <property type="project" value="TAIR"/>
</dbReference>
<dbReference type="GO" id="GO:0006796">
    <property type="term" value="P:phosphate-containing compound metabolic process"/>
    <property type="evidence" value="ECO:0000314"/>
    <property type="project" value="TAIR"/>
</dbReference>
<dbReference type="CDD" id="cd00839">
    <property type="entry name" value="MPP_PAPs"/>
    <property type="match status" value="1"/>
</dbReference>
<dbReference type="FunFam" id="2.60.40.380:FF:000001">
    <property type="entry name" value="Fe(3+)-Zn(2+) purple acid phosphatase"/>
    <property type="match status" value="1"/>
</dbReference>
<dbReference type="FunFam" id="3.60.21.10:FF:000034">
    <property type="entry name" value="Fe(3+)-Zn(2+) purple acid phosphatase"/>
    <property type="match status" value="1"/>
</dbReference>
<dbReference type="Gene3D" id="3.60.21.10">
    <property type="match status" value="1"/>
</dbReference>
<dbReference type="Gene3D" id="2.60.40.380">
    <property type="entry name" value="Purple acid phosphatase-like, N-terminal"/>
    <property type="match status" value="1"/>
</dbReference>
<dbReference type="InterPro" id="IPR004843">
    <property type="entry name" value="Calcineurin-like_PHP_ApaH"/>
</dbReference>
<dbReference type="InterPro" id="IPR029052">
    <property type="entry name" value="Metallo-depent_PP-like"/>
</dbReference>
<dbReference type="InterPro" id="IPR041792">
    <property type="entry name" value="MPP_PAP"/>
</dbReference>
<dbReference type="InterPro" id="IPR039331">
    <property type="entry name" value="PPA-like"/>
</dbReference>
<dbReference type="InterPro" id="IPR008963">
    <property type="entry name" value="Purple_acid_Pase-like_N"/>
</dbReference>
<dbReference type="InterPro" id="IPR015914">
    <property type="entry name" value="Purple_acid_Pase_N"/>
</dbReference>
<dbReference type="InterPro" id="IPR025733">
    <property type="entry name" value="Purple_acid_PPase_C_dom"/>
</dbReference>
<dbReference type="PANTHER" id="PTHR22953">
    <property type="entry name" value="ACID PHOSPHATASE RELATED"/>
    <property type="match status" value="1"/>
</dbReference>
<dbReference type="PANTHER" id="PTHR22953:SF114">
    <property type="entry name" value="PURPLE ACID PHOSPHATASE 25-RELATED"/>
    <property type="match status" value="1"/>
</dbReference>
<dbReference type="Pfam" id="PF00149">
    <property type="entry name" value="Metallophos"/>
    <property type="match status" value="1"/>
</dbReference>
<dbReference type="Pfam" id="PF14008">
    <property type="entry name" value="Metallophos_C"/>
    <property type="match status" value="1"/>
</dbReference>
<dbReference type="Pfam" id="PF16656">
    <property type="entry name" value="Pur_ac_phosph_N"/>
    <property type="match status" value="1"/>
</dbReference>
<dbReference type="SUPFAM" id="SSF56300">
    <property type="entry name" value="Metallo-dependent phosphatases"/>
    <property type="match status" value="1"/>
</dbReference>
<dbReference type="SUPFAM" id="SSF49363">
    <property type="entry name" value="Purple acid phosphatase, N-terminal domain"/>
    <property type="match status" value="1"/>
</dbReference>
<gene>
    <name type="primary">PAP25</name>
    <name type="synonym">AT7</name>
    <name type="synonym">ATH2</name>
    <name type="ordered locus">At4g36350</name>
    <name type="ORF">C7A10.1010</name>
    <name type="ORF">F23E13.190</name>
</gene>
<keyword id="KW-0325">Glycoprotein</keyword>
<keyword id="KW-0378">Hydrolase</keyword>
<keyword id="KW-0408">Iron</keyword>
<keyword id="KW-0479">Metal-binding</keyword>
<keyword id="KW-1185">Reference proteome</keyword>
<keyword id="KW-0964">Secreted</keyword>
<keyword id="KW-0732">Signal</keyword>
<keyword id="KW-0862">Zinc</keyword>
<proteinExistence type="evidence at transcript level"/>
<protein>
    <recommendedName>
        <fullName>Purple acid phosphatase 25</fullName>
        <ecNumber>3.1.3.2</ecNumber>
    </recommendedName>
</protein>
<sequence length="466" mass="52969">MRMNKILLVFVFLSIATVINSGTTSNFVRTAQPSTEMSLETFPSPAGHNAPEQVHIVQGDYNGRGIIISWVTPLNLAGSNVVTYWKAVDGDVKPKKKRGHASTSSYRFYDYTSGFLHHATIKGLEYDTKYIYEVGTDGSVRQFSFTSPPKVGPDVPYTFGIIGDLGQTLASNETLYHYMSNPKGQAVLFPGDLSYADDHPNHDQRKWDSWGRFVEPCAAYQTFIYAAGNHEIDFVPNIGEPHAFKPYIHRYHNAYKASKSISPLWYSIRRASAHIIVLSSYSAYGKYTPQYVWLEQELKKVNREETPWLIVMVHSPWYNSNNYHYMEGESMRAMFESWFVNSKVDLVLSGHVHSYERSERVSNIKYNITNGLSYPVKDPSAPIYITIGDGGNIEGIANSFTDPQPSYSAYREASFGHAVLEIYNRTHAYYTWHRNQDNEPVAADSIMLHNRYFFPVEELESGNTRA</sequence>
<organism>
    <name type="scientific">Arabidopsis thaliana</name>
    <name type="common">Mouse-ear cress</name>
    <dbReference type="NCBI Taxonomy" id="3702"/>
    <lineage>
        <taxon>Eukaryota</taxon>
        <taxon>Viridiplantae</taxon>
        <taxon>Streptophyta</taxon>
        <taxon>Embryophyta</taxon>
        <taxon>Tracheophyta</taxon>
        <taxon>Spermatophyta</taxon>
        <taxon>Magnoliopsida</taxon>
        <taxon>eudicotyledons</taxon>
        <taxon>Gunneridae</taxon>
        <taxon>Pentapetalae</taxon>
        <taxon>rosids</taxon>
        <taxon>malvids</taxon>
        <taxon>Brassicales</taxon>
        <taxon>Brassicaceae</taxon>
        <taxon>Camelineae</taxon>
        <taxon>Arabidopsis</taxon>
    </lineage>
</organism>